<feature type="chain" id="PRO_1000056203" description="Bifunctional protein GlmU">
    <location>
        <begin position="1"/>
        <end position="452"/>
    </location>
</feature>
<feature type="region of interest" description="Pyrophosphorylase" evidence="1">
    <location>
        <begin position="1"/>
        <end position="233"/>
    </location>
</feature>
<feature type="region of interest" description="Linker" evidence="1">
    <location>
        <begin position="234"/>
        <end position="254"/>
    </location>
</feature>
<feature type="region of interest" description="N-acetyltransferase" evidence="1">
    <location>
        <begin position="255"/>
        <end position="452"/>
    </location>
</feature>
<feature type="active site" description="Proton acceptor" evidence="1">
    <location>
        <position position="350"/>
    </location>
</feature>
<feature type="binding site" evidence="1">
    <location>
        <begin position="11"/>
        <end position="14"/>
    </location>
    <ligand>
        <name>UDP-N-acetyl-alpha-D-glucosamine</name>
        <dbReference type="ChEBI" id="CHEBI:57705"/>
    </ligand>
</feature>
<feature type="binding site" evidence="1">
    <location>
        <position position="25"/>
    </location>
    <ligand>
        <name>UDP-N-acetyl-alpha-D-glucosamine</name>
        <dbReference type="ChEBI" id="CHEBI:57705"/>
    </ligand>
</feature>
<feature type="binding site" evidence="1">
    <location>
        <position position="76"/>
    </location>
    <ligand>
        <name>UDP-N-acetyl-alpha-D-glucosamine</name>
        <dbReference type="ChEBI" id="CHEBI:57705"/>
    </ligand>
</feature>
<feature type="binding site" evidence="1">
    <location>
        <begin position="81"/>
        <end position="82"/>
    </location>
    <ligand>
        <name>UDP-N-acetyl-alpha-D-glucosamine</name>
        <dbReference type="ChEBI" id="CHEBI:57705"/>
    </ligand>
</feature>
<feature type="binding site" evidence="1">
    <location>
        <begin position="104"/>
        <end position="106"/>
    </location>
    <ligand>
        <name>UDP-N-acetyl-alpha-D-glucosamine</name>
        <dbReference type="ChEBI" id="CHEBI:57705"/>
    </ligand>
</feature>
<feature type="binding site" evidence="1">
    <location>
        <position position="106"/>
    </location>
    <ligand>
        <name>Mg(2+)</name>
        <dbReference type="ChEBI" id="CHEBI:18420"/>
    </ligand>
</feature>
<feature type="binding site" evidence="1">
    <location>
        <position position="144"/>
    </location>
    <ligand>
        <name>UDP-N-acetyl-alpha-D-glucosamine</name>
        <dbReference type="ChEBI" id="CHEBI:57705"/>
    </ligand>
</feature>
<feature type="binding site" evidence="1">
    <location>
        <position position="159"/>
    </location>
    <ligand>
        <name>UDP-N-acetyl-alpha-D-glucosamine</name>
        <dbReference type="ChEBI" id="CHEBI:57705"/>
    </ligand>
</feature>
<feature type="binding site" evidence="1">
    <location>
        <position position="174"/>
    </location>
    <ligand>
        <name>UDP-N-acetyl-alpha-D-glucosamine</name>
        <dbReference type="ChEBI" id="CHEBI:57705"/>
    </ligand>
</feature>
<feature type="binding site" evidence="1">
    <location>
        <position position="231"/>
    </location>
    <ligand>
        <name>Mg(2+)</name>
        <dbReference type="ChEBI" id="CHEBI:18420"/>
    </ligand>
</feature>
<feature type="binding site" evidence="1">
    <location>
        <position position="231"/>
    </location>
    <ligand>
        <name>UDP-N-acetyl-alpha-D-glucosamine</name>
        <dbReference type="ChEBI" id="CHEBI:57705"/>
    </ligand>
</feature>
<feature type="binding site" evidence="1">
    <location>
        <position position="320"/>
    </location>
    <ligand>
        <name>UDP-N-acetyl-alpha-D-glucosamine</name>
        <dbReference type="ChEBI" id="CHEBI:57705"/>
    </ligand>
</feature>
<feature type="binding site" evidence="1">
    <location>
        <position position="338"/>
    </location>
    <ligand>
        <name>UDP-N-acetyl-alpha-D-glucosamine</name>
        <dbReference type="ChEBI" id="CHEBI:57705"/>
    </ligand>
</feature>
<feature type="binding site" evidence="1">
    <location>
        <position position="353"/>
    </location>
    <ligand>
        <name>UDP-N-acetyl-alpha-D-glucosamine</name>
        <dbReference type="ChEBI" id="CHEBI:57705"/>
    </ligand>
</feature>
<feature type="binding site" evidence="1">
    <location>
        <position position="364"/>
    </location>
    <ligand>
        <name>UDP-N-acetyl-alpha-D-glucosamine</name>
        <dbReference type="ChEBI" id="CHEBI:57705"/>
    </ligand>
</feature>
<feature type="binding site" evidence="1">
    <location>
        <position position="367"/>
    </location>
    <ligand>
        <name>acetyl-CoA</name>
        <dbReference type="ChEBI" id="CHEBI:57288"/>
    </ligand>
</feature>
<feature type="binding site" evidence="1">
    <location>
        <begin position="373"/>
        <end position="374"/>
    </location>
    <ligand>
        <name>acetyl-CoA</name>
        <dbReference type="ChEBI" id="CHEBI:57288"/>
    </ligand>
</feature>
<feature type="binding site" evidence="1">
    <location>
        <position position="392"/>
    </location>
    <ligand>
        <name>acetyl-CoA</name>
        <dbReference type="ChEBI" id="CHEBI:57288"/>
    </ligand>
</feature>
<feature type="binding site" evidence="1">
    <location>
        <position position="410"/>
    </location>
    <ligand>
        <name>acetyl-CoA</name>
        <dbReference type="ChEBI" id="CHEBI:57288"/>
    </ligand>
</feature>
<feature type="binding site" evidence="1">
    <location>
        <position position="427"/>
    </location>
    <ligand>
        <name>acetyl-CoA</name>
        <dbReference type="ChEBI" id="CHEBI:57288"/>
    </ligand>
</feature>
<accession>A5VF26</accession>
<gene>
    <name evidence="1" type="primary">glmU</name>
    <name type="ordered locus">Swit_4554</name>
</gene>
<sequence length="452" mass="47727">MTDRPFAALILAAGKGTRMKSDLHKVLHPIAGKPMLGHLIAAVDRLGAARKLVVTGAGREQVEAFVAPLGVEVATQEPQLGTAHAVQQGEAALADFDGDVLILYGDVPLVPAETIRRMLDRLQGEDAPVAVVLGFRPDDALAYGRILARGDGAIDDMVEYKDATTEQRAIDLCNSGLMAVRGRDLWRLLAQVGNDNAAGEYYLPDIVRIARAEGGRSVVVEAEAWEVAGVNSRAELAAVEAEWQRRRRLAAMADGATLIAPETVWFSHDTMVGRDVVIEPHVVFGPGVTIEDGVAIHGFSHVEGATVRTGAEIGPYARLRPGADIGEGAKIGNFVEVKNGRFGKGAKANHLSYIGDADVGAKANIGAGTITCNYDGFLKYRTVIGEGAFIGSNSALVAPVTIGDGAIVGAGSTVTRDVEADALAVARGKQESRTGWAARFREAMKIKKAARK</sequence>
<comment type="function">
    <text evidence="1">Catalyzes the last two sequential reactions in the de novo biosynthetic pathway for UDP-N-acetylglucosamine (UDP-GlcNAc). The C-terminal domain catalyzes the transfer of acetyl group from acetyl coenzyme A to glucosamine-1-phosphate (GlcN-1-P) to produce N-acetylglucosamine-1-phosphate (GlcNAc-1-P), which is converted into UDP-GlcNAc by the transfer of uridine 5-monophosphate (from uridine 5-triphosphate), a reaction catalyzed by the N-terminal domain.</text>
</comment>
<comment type="catalytic activity">
    <reaction evidence="1">
        <text>alpha-D-glucosamine 1-phosphate + acetyl-CoA = N-acetyl-alpha-D-glucosamine 1-phosphate + CoA + H(+)</text>
        <dbReference type="Rhea" id="RHEA:13725"/>
        <dbReference type="ChEBI" id="CHEBI:15378"/>
        <dbReference type="ChEBI" id="CHEBI:57287"/>
        <dbReference type="ChEBI" id="CHEBI:57288"/>
        <dbReference type="ChEBI" id="CHEBI:57776"/>
        <dbReference type="ChEBI" id="CHEBI:58516"/>
        <dbReference type="EC" id="2.3.1.157"/>
    </reaction>
</comment>
<comment type="catalytic activity">
    <reaction evidence="1">
        <text>N-acetyl-alpha-D-glucosamine 1-phosphate + UTP + H(+) = UDP-N-acetyl-alpha-D-glucosamine + diphosphate</text>
        <dbReference type="Rhea" id="RHEA:13509"/>
        <dbReference type="ChEBI" id="CHEBI:15378"/>
        <dbReference type="ChEBI" id="CHEBI:33019"/>
        <dbReference type="ChEBI" id="CHEBI:46398"/>
        <dbReference type="ChEBI" id="CHEBI:57705"/>
        <dbReference type="ChEBI" id="CHEBI:57776"/>
        <dbReference type="EC" id="2.7.7.23"/>
    </reaction>
</comment>
<comment type="cofactor">
    <cofactor evidence="1">
        <name>Mg(2+)</name>
        <dbReference type="ChEBI" id="CHEBI:18420"/>
    </cofactor>
    <text evidence="1">Binds 1 Mg(2+) ion per subunit.</text>
</comment>
<comment type="pathway">
    <text evidence="1">Nucleotide-sugar biosynthesis; UDP-N-acetyl-alpha-D-glucosamine biosynthesis; N-acetyl-alpha-D-glucosamine 1-phosphate from alpha-D-glucosamine 6-phosphate (route II): step 2/2.</text>
</comment>
<comment type="pathway">
    <text evidence="1">Nucleotide-sugar biosynthesis; UDP-N-acetyl-alpha-D-glucosamine biosynthesis; UDP-N-acetyl-alpha-D-glucosamine from N-acetyl-alpha-D-glucosamine 1-phosphate: step 1/1.</text>
</comment>
<comment type="pathway">
    <text evidence="1">Bacterial outer membrane biogenesis; LPS lipid A biosynthesis.</text>
</comment>
<comment type="subunit">
    <text evidence="1">Homotrimer.</text>
</comment>
<comment type="subcellular location">
    <subcellularLocation>
        <location evidence="1">Cytoplasm</location>
    </subcellularLocation>
</comment>
<comment type="similarity">
    <text evidence="1">In the N-terminal section; belongs to the N-acetylglucosamine-1-phosphate uridyltransferase family.</text>
</comment>
<comment type="similarity">
    <text evidence="1">In the C-terminal section; belongs to the transferase hexapeptide repeat family.</text>
</comment>
<organism>
    <name type="scientific">Rhizorhabdus wittichii (strain DSM 6014 / CCUG 31198 / JCM 15750 / NBRC 105917 / EY 4224 / RW1)</name>
    <name type="common">Sphingomonas wittichii</name>
    <dbReference type="NCBI Taxonomy" id="392499"/>
    <lineage>
        <taxon>Bacteria</taxon>
        <taxon>Pseudomonadati</taxon>
        <taxon>Pseudomonadota</taxon>
        <taxon>Alphaproteobacteria</taxon>
        <taxon>Sphingomonadales</taxon>
        <taxon>Sphingomonadaceae</taxon>
        <taxon>Rhizorhabdus</taxon>
    </lineage>
</organism>
<reference key="1">
    <citation type="journal article" date="2010" name="J. Bacteriol.">
        <title>Genome sequence of the dioxin-mineralizing bacterium Sphingomonas wittichii RW1.</title>
        <authorList>
            <person name="Miller T.R."/>
            <person name="Delcher A.L."/>
            <person name="Salzberg S.L."/>
            <person name="Saunders E."/>
            <person name="Detter J.C."/>
            <person name="Halden R.U."/>
        </authorList>
    </citation>
    <scope>NUCLEOTIDE SEQUENCE [LARGE SCALE GENOMIC DNA]</scope>
    <source>
        <strain>DSM 6014 / CCUG 31198 / JCM 15750 / NBRC 105917 / EY 4224 / RW1</strain>
    </source>
</reference>
<protein>
    <recommendedName>
        <fullName evidence="1">Bifunctional protein GlmU</fullName>
    </recommendedName>
    <domain>
        <recommendedName>
            <fullName evidence="1">UDP-N-acetylglucosamine pyrophosphorylase</fullName>
            <ecNumber evidence="1">2.7.7.23</ecNumber>
        </recommendedName>
        <alternativeName>
            <fullName evidence="1">N-acetylglucosamine-1-phosphate uridyltransferase</fullName>
        </alternativeName>
    </domain>
    <domain>
        <recommendedName>
            <fullName evidence="1">Glucosamine-1-phosphate N-acetyltransferase</fullName>
            <ecNumber evidence="1">2.3.1.157</ecNumber>
        </recommendedName>
    </domain>
</protein>
<dbReference type="EC" id="2.7.7.23" evidence="1"/>
<dbReference type="EC" id="2.3.1.157" evidence="1"/>
<dbReference type="EMBL" id="CP000699">
    <property type="protein sequence ID" value="ABQ70892.1"/>
    <property type="molecule type" value="Genomic_DNA"/>
</dbReference>
<dbReference type="SMR" id="A5VF26"/>
<dbReference type="STRING" id="392499.Swit_4554"/>
<dbReference type="PaxDb" id="392499-Swit_4554"/>
<dbReference type="KEGG" id="swi:Swit_4554"/>
<dbReference type="eggNOG" id="COG1207">
    <property type="taxonomic scope" value="Bacteria"/>
</dbReference>
<dbReference type="HOGENOM" id="CLU_029499_15_2_5"/>
<dbReference type="OrthoDB" id="9775031at2"/>
<dbReference type="UniPathway" id="UPA00113">
    <property type="reaction ID" value="UER00532"/>
</dbReference>
<dbReference type="UniPathway" id="UPA00113">
    <property type="reaction ID" value="UER00533"/>
</dbReference>
<dbReference type="UniPathway" id="UPA00973"/>
<dbReference type="Proteomes" id="UP000001989">
    <property type="component" value="Chromosome"/>
</dbReference>
<dbReference type="GO" id="GO:0005737">
    <property type="term" value="C:cytoplasm"/>
    <property type="evidence" value="ECO:0007669"/>
    <property type="project" value="UniProtKB-SubCell"/>
</dbReference>
<dbReference type="GO" id="GO:0016020">
    <property type="term" value="C:membrane"/>
    <property type="evidence" value="ECO:0007669"/>
    <property type="project" value="GOC"/>
</dbReference>
<dbReference type="GO" id="GO:0019134">
    <property type="term" value="F:glucosamine-1-phosphate N-acetyltransferase activity"/>
    <property type="evidence" value="ECO:0007669"/>
    <property type="project" value="UniProtKB-UniRule"/>
</dbReference>
<dbReference type="GO" id="GO:0000287">
    <property type="term" value="F:magnesium ion binding"/>
    <property type="evidence" value="ECO:0007669"/>
    <property type="project" value="UniProtKB-UniRule"/>
</dbReference>
<dbReference type="GO" id="GO:0003977">
    <property type="term" value="F:UDP-N-acetylglucosamine diphosphorylase activity"/>
    <property type="evidence" value="ECO:0007669"/>
    <property type="project" value="UniProtKB-UniRule"/>
</dbReference>
<dbReference type="GO" id="GO:0000902">
    <property type="term" value="P:cell morphogenesis"/>
    <property type="evidence" value="ECO:0007669"/>
    <property type="project" value="UniProtKB-UniRule"/>
</dbReference>
<dbReference type="GO" id="GO:0071555">
    <property type="term" value="P:cell wall organization"/>
    <property type="evidence" value="ECO:0007669"/>
    <property type="project" value="UniProtKB-KW"/>
</dbReference>
<dbReference type="GO" id="GO:0009245">
    <property type="term" value="P:lipid A biosynthetic process"/>
    <property type="evidence" value="ECO:0007669"/>
    <property type="project" value="UniProtKB-UniRule"/>
</dbReference>
<dbReference type="GO" id="GO:0009252">
    <property type="term" value="P:peptidoglycan biosynthetic process"/>
    <property type="evidence" value="ECO:0007669"/>
    <property type="project" value="UniProtKB-UniRule"/>
</dbReference>
<dbReference type="GO" id="GO:0008360">
    <property type="term" value="P:regulation of cell shape"/>
    <property type="evidence" value="ECO:0007669"/>
    <property type="project" value="UniProtKB-KW"/>
</dbReference>
<dbReference type="GO" id="GO:0006048">
    <property type="term" value="P:UDP-N-acetylglucosamine biosynthetic process"/>
    <property type="evidence" value="ECO:0007669"/>
    <property type="project" value="UniProtKB-UniPathway"/>
</dbReference>
<dbReference type="CDD" id="cd02540">
    <property type="entry name" value="GT2_GlmU_N_bac"/>
    <property type="match status" value="1"/>
</dbReference>
<dbReference type="CDD" id="cd03353">
    <property type="entry name" value="LbH_GlmU_C"/>
    <property type="match status" value="1"/>
</dbReference>
<dbReference type="Gene3D" id="2.160.10.10">
    <property type="entry name" value="Hexapeptide repeat proteins"/>
    <property type="match status" value="1"/>
</dbReference>
<dbReference type="Gene3D" id="3.90.550.10">
    <property type="entry name" value="Spore Coat Polysaccharide Biosynthesis Protein SpsA, Chain A"/>
    <property type="match status" value="1"/>
</dbReference>
<dbReference type="HAMAP" id="MF_01631">
    <property type="entry name" value="GlmU"/>
    <property type="match status" value="1"/>
</dbReference>
<dbReference type="InterPro" id="IPR005882">
    <property type="entry name" value="Bifunctional_GlmU"/>
</dbReference>
<dbReference type="InterPro" id="IPR050065">
    <property type="entry name" value="GlmU-like"/>
</dbReference>
<dbReference type="InterPro" id="IPR038009">
    <property type="entry name" value="GlmU_C_LbH"/>
</dbReference>
<dbReference type="InterPro" id="IPR001451">
    <property type="entry name" value="Hexapep"/>
</dbReference>
<dbReference type="InterPro" id="IPR018357">
    <property type="entry name" value="Hexapep_transf_CS"/>
</dbReference>
<dbReference type="InterPro" id="IPR025877">
    <property type="entry name" value="MobA-like_NTP_Trfase"/>
</dbReference>
<dbReference type="InterPro" id="IPR029044">
    <property type="entry name" value="Nucleotide-diphossugar_trans"/>
</dbReference>
<dbReference type="InterPro" id="IPR011004">
    <property type="entry name" value="Trimer_LpxA-like_sf"/>
</dbReference>
<dbReference type="NCBIfam" id="TIGR01173">
    <property type="entry name" value="glmU"/>
    <property type="match status" value="1"/>
</dbReference>
<dbReference type="NCBIfam" id="NF010933">
    <property type="entry name" value="PRK14353.1"/>
    <property type="match status" value="1"/>
</dbReference>
<dbReference type="PANTHER" id="PTHR43584:SF3">
    <property type="entry name" value="BIFUNCTIONAL PROTEIN GLMU"/>
    <property type="match status" value="1"/>
</dbReference>
<dbReference type="PANTHER" id="PTHR43584">
    <property type="entry name" value="NUCLEOTIDYL TRANSFERASE"/>
    <property type="match status" value="1"/>
</dbReference>
<dbReference type="Pfam" id="PF00132">
    <property type="entry name" value="Hexapep"/>
    <property type="match status" value="1"/>
</dbReference>
<dbReference type="Pfam" id="PF12804">
    <property type="entry name" value="NTP_transf_3"/>
    <property type="match status" value="1"/>
</dbReference>
<dbReference type="SUPFAM" id="SSF53448">
    <property type="entry name" value="Nucleotide-diphospho-sugar transferases"/>
    <property type="match status" value="1"/>
</dbReference>
<dbReference type="SUPFAM" id="SSF51161">
    <property type="entry name" value="Trimeric LpxA-like enzymes"/>
    <property type="match status" value="1"/>
</dbReference>
<dbReference type="PROSITE" id="PS00101">
    <property type="entry name" value="HEXAPEP_TRANSFERASES"/>
    <property type="match status" value="1"/>
</dbReference>
<evidence type="ECO:0000255" key="1">
    <source>
        <dbReference type="HAMAP-Rule" id="MF_01631"/>
    </source>
</evidence>
<proteinExistence type="inferred from homology"/>
<keyword id="KW-0012">Acyltransferase</keyword>
<keyword id="KW-0133">Cell shape</keyword>
<keyword id="KW-0961">Cell wall biogenesis/degradation</keyword>
<keyword id="KW-0963">Cytoplasm</keyword>
<keyword id="KW-0460">Magnesium</keyword>
<keyword id="KW-0479">Metal-binding</keyword>
<keyword id="KW-0511">Multifunctional enzyme</keyword>
<keyword id="KW-0548">Nucleotidyltransferase</keyword>
<keyword id="KW-0573">Peptidoglycan synthesis</keyword>
<keyword id="KW-1185">Reference proteome</keyword>
<keyword id="KW-0677">Repeat</keyword>
<keyword id="KW-0808">Transferase</keyword>
<name>GLMU_RHIWR</name>